<gene>
    <name type="primary">FAM186A</name>
    <name type="synonym">Gm920</name>
</gene>
<reference key="1">
    <citation type="journal article" date="2005" name="Science">
        <title>The transcriptional landscape of the mammalian genome.</title>
        <authorList>
            <person name="Carninci P."/>
            <person name="Kasukawa T."/>
            <person name="Katayama S."/>
            <person name="Gough J."/>
            <person name="Frith M.C."/>
            <person name="Maeda N."/>
            <person name="Oyama R."/>
            <person name="Ravasi T."/>
            <person name="Lenhard B."/>
            <person name="Wells C."/>
            <person name="Kodzius R."/>
            <person name="Shimokawa K."/>
            <person name="Bajic V.B."/>
            <person name="Brenner S.E."/>
            <person name="Batalov S."/>
            <person name="Forrest A.R."/>
            <person name="Zavolan M."/>
            <person name="Davis M.J."/>
            <person name="Wilming L.G."/>
            <person name="Aidinis V."/>
            <person name="Allen J.E."/>
            <person name="Ambesi-Impiombato A."/>
            <person name="Apweiler R."/>
            <person name="Aturaliya R.N."/>
            <person name="Bailey T.L."/>
            <person name="Bansal M."/>
            <person name="Baxter L."/>
            <person name="Beisel K.W."/>
            <person name="Bersano T."/>
            <person name="Bono H."/>
            <person name="Chalk A.M."/>
            <person name="Chiu K.P."/>
            <person name="Choudhary V."/>
            <person name="Christoffels A."/>
            <person name="Clutterbuck D.R."/>
            <person name="Crowe M.L."/>
            <person name="Dalla E."/>
            <person name="Dalrymple B.P."/>
            <person name="de Bono B."/>
            <person name="Della Gatta G."/>
            <person name="di Bernardo D."/>
            <person name="Down T."/>
            <person name="Engstrom P."/>
            <person name="Fagiolini M."/>
            <person name="Faulkner G."/>
            <person name="Fletcher C.F."/>
            <person name="Fukushima T."/>
            <person name="Furuno M."/>
            <person name="Futaki S."/>
            <person name="Gariboldi M."/>
            <person name="Georgii-Hemming P."/>
            <person name="Gingeras T.R."/>
            <person name="Gojobori T."/>
            <person name="Green R.E."/>
            <person name="Gustincich S."/>
            <person name="Harbers M."/>
            <person name="Hayashi Y."/>
            <person name="Hensch T.K."/>
            <person name="Hirokawa N."/>
            <person name="Hill D."/>
            <person name="Huminiecki L."/>
            <person name="Iacono M."/>
            <person name="Ikeo K."/>
            <person name="Iwama A."/>
            <person name="Ishikawa T."/>
            <person name="Jakt M."/>
            <person name="Kanapin A."/>
            <person name="Katoh M."/>
            <person name="Kawasawa Y."/>
            <person name="Kelso J."/>
            <person name="Kitamura H."/>
            <person name="Kitano H."/>
            <person name="Kollias G."/>
            <person name="Krishnan S.P."/>
            <person name="Kruger A."/>
            <person name="Kummerfeld S.K."/>
            <person name="Kurochkin I.V."/>
            <person name="Lareau L.F."/>
            <person name="Lazarevic D."/>
            <person name="Lipovich L."/>
            <person name="Liu J."/>
            <person name="Liuni S."/>
            <person name="McWilliam S."/>
            <person name="Madan Babu M."/>
            <person name="Madera M."/>
            <person name="Marchionni L."/>
            <person name="Matsuda H."/>
            <person name="Matsuzawa S."/>
            <person name="Miki H."/>
            <person name="Mignone F."/>
            <person name="Miyake S."/>
            <person name="Morris K."/>
            <person name="Mottagui-Tabar S."/>
            <person name="Mulder N."/>
            <person name="Nakano N."/>
            <person name="Nakauchi H."/>
            <person name="Ng P."/>
            <person name="Nilsson R."/>
            <person name="Nishiguchi S."/>
            <person name="Nishikawa S."/>
            <person name="Nori F."/>
            <person name="Ohara O."/>
            <person name="Okazaki Y."/>
            <person name="Orlando V."/>
            <person name="Pang K.C."/>
            <person name="Pavan W.J."/>
            <person name="Pavesi G."/>
            <person name="Pesole G."/>
            <person name="Petrovsky N."/>
            <person name="Piazza S."/>
            <person name="Reed J."/>
            <person name="Reid J.F."/>
            <person name="Ring B.Z."/>
            <person name="Ringwald M."/>
            <person name="Rost B."/>
            <person name="Ruan Y."/>
            <person name="Salzberg S.L."/>
            <person name="Sandelin A."/>
            <person name="Schneider C."/>
            <person name="Schoenbach C."/>
            <person name="Sekiguchi K."/>
            <person name="Semple C.A."/>
            <person name="Seno S."/>
            <person name="Sessa L."/>
            <person name="Sheng Y."/>
            <person name="Shibata Y."/>
            <person name="Shimada H."/>
            <person name="Shimada K."/>
            <person name="Silva D."/>
            <person name="Sinclair B."/>
            <person name="Sperling S."/>
            <person name="Stupka E."/>
            <person name="Sugiura K."/>
            <person name="Sultana R."/>
            <person name="Takenaka Y."/>
            <person name="Taki K."/>
            <person name="Tammoja K."/>
            <person name="Tan S.L."/>
            <person name="Tang S."/>
            <person name="Taylor M.S."/>
            <person name="Tegner J."/>
            <person name="Teichmann S.A."/>
            <person name="Ueda H.R."/>
            <person name="van Nimwegen E."/>
            <person name="Verardo R."/>
            <person name="Wei C.L."/>
            <person name="Yagi K."/>
            <person name="Yamanishi H."/>
            <person name="Zabarovsky E."/>
            <person name="Zhu S."/>
            <person name="Zimmer A."/>
            <person name="Hide W."/>
            <person name="Bult C."/>
            <person name="Grimmond S.M."/>
            <person name="Teasdale R.D."/>
            <person name="Liu E.T."/>
            <person name="Brusic V."/>
            <person name="Quackenbush J."/>
            <person name="Wahlestedt C."/>
            <person name="Mattick J.S."/>
            <person name="Hume D.A."/>
            <person name="Kai C."/>
            <person name="Sasaki D."/>
            <person name="Tomaru Y."/>
            <person name="Fukuda S."/>
            <person name="Kanamori-Katayama M."/>
            <person name="Suzuki M."/>
            <person name="Aoki J."/>
            <person name="Arakawa T."/>
            <person name="Iida J."/>
            <person name="Imamura K."/>
            <person name="Itoh M."/>
            <person name="Kato T."/>
            <person name="Kawaji H."/>
            <person name="Kawagashira N."/>
            <person name="Kawashima T."/>
            <person name="Kojima M."/>
            <person name="Kondo S."/>
            <person name="Konno H."/>
            <person name="Nakano K."/>
            <person name="Ninomiya N."/>
            <person name="Nishio T."/>
            <person name="Okada M."/>
            <person name="Plessy C."/>
            <person name="Shibata K."/>
            <person name="Shiraki T."/>
            <person name="Suzuki S."/>
            <person name="Tagami M."/>
            <person name="Waki K."/>
            <person name="Watahiki A."/>
            <person name="Okamura-Oho Y."/>
            <person name="Suzuki H."/>
            <person name="Kawai J."/>
            <person name="Hayashizaki Y."/>
        </authorList>
    </citation>
    <scope>NUCLEOTIDE SEQUENCE [LARGE SCALE MRNA] (ISOFORM 2)</scope>
    <source>
        <strain>C57BL/6J</strain>
        <tissue>Testis</tissue>
    </source>
</reference>
<reference key="2">
    <citation type="journal article" date="2009" name="PLoS Biol.">
        <title>Lineage-specific biology revealed by a finished genome assembly of the mouse.</title>
        <authorList>
            <person name="Church D.M."/>
            <person name="Goodstadt L."/>
            <person name="Hillier L.W."/>
            <person name="Zody M.C."/>
            <person name="Goldstein S."/>
            <person name="She X."/>
            <person name="Bult C.J."/>
            <person name="Agarwala R."/>
            <person name="Cherry J.L."/>
            <person name="DiCuccio M."/>
            <person name="Hlavina W."/>
            <person name="Kapustin Y."/>
            <person name="Meric P."/>
            <person name="Maglott D."/>
            <person name="Birtle Z."/>
            <person name="Marques A.C."/>
            <person name="Graves T."/>
            <person name="Zhou S."/>
            <person name="Teague B."/>
            <person name="Potamousis K."/>
            <person name="Churas C."/>
            <person name="Place M."/>
            <person name="Herschleb J."/>
            <person name="Runnheim R."/>
            <person name="Forrest D."/>
            <person name="Amos-Landgraf J."/>
            <person name="Schwartz D.C."/>
            <person name="Cheng Z."/>
            <person name="Lindblad-Toh K."/>
            <person name="Eichler E.E."/>
            <person name="Ponting C.P."/>
        </authorList>
    </citation>
    <scope>NUCLEOTIDE SEQUENCE [LARGE SCALE GENOMIC DNA]</scope>
    <source>
        <strain>C57BL/6J</strain>
    </source>
</reference>
<reference key="3">
    <citation type="journal article" date="2004" name="Genome Res.">
        <title>The status, quality, and expansion of the NIH full-length cDNA project: the Mammalian Gene Collection (MGC).</title>
        <authorList>
            <consortium name="The MGC Project Team"/>
        </authorList>
    </citation>
    <scope>NUCLEOTIDE SEQUENCE [LARGE SCALE MRNA] (ISOFORM 2)</scope>
    <source>
        <tissue>Testis</tissue>
    </source>
</reference>
<name>F186A_MOUSE</name>
<dbReference type="EMBL" id="AK006542">
    <property type="protein sequence ID" value="BAB24644.1"/>
    <property type="molecule type" value="mRNA"/>
</dbReference>
<dbReference type="EMBL" id="AC138177">
    <property type="status" value="NOT_ANNOTATED_CDS"/>
    <property type="molecule type" value="Genomic_DNA"/>
</dbReference>
<dbReference type="EMBL" id="BC048613">
    <property type="protein sequence ID" value="AAH48613.1"/>
    <property type="molecule type" value="mRNA"/>
</dbReference>
<dbReference type="CCDS" id="CCDS37207.1">
    <molecule id="Q9D9R9-2"/>
</dbReference>
<dbReference type="RefSeq" id="NP_082456.1">
    <molecule id="Q9D9R9-2"/>
    <property type="nucleotide sequence ID" value="NM_028180.3"/>
</dbReference>
<dbReference type="SMR" id="Q9D9R9"/>
<dbReference type="FunCoup" id="Q9D9R9">
    <property type="interactions" value="5"/>
</dbReference>
<dbReference type="IntAct" id="Q9D9R9">
    <property type="interactions" value="1"/>
</dbReference>
<dbReference type="STRING" id="10090.ENSMUSP00000053434"/>
<dbReference type="GlyGen" id="Q9D9R9">
    <property type="glycosylation" value="27 sites"/>
</dbReference>
<dbReference type="PhosphoSitePlus" id="Q9D9R9"/>
<dbReference type="PaxDb" id="10090-ENSMUSP00000053434"/>
<dbReference type="ProteomicsDB" id="275718">
    <molecule id="Q9D9R9-1"/>
</dbReference>
<dbReference type="Antibodypedia" id="49485">
    <property type="antibodies" value="9 antibodies from 6 providers"/>
</dbReference>
<dbReference type="DNASU" id="72277"/>
<dbReference type="Ensembl" id="ENSMUST00000062631.15">
    <molecule id="Q9D9R9-2"/>
    <property type="protein sequence ID" value="ENSMUSP00000053434.9"/>
    <property type="gene ID" value="ENSMUSG00000045350.16"/>
</dbReference>
<dbReference type="GeneID" id="72277"/>
<dbReference type="KEGG" id="mmu:72277"/>
<dbReference type="UCSC" id="uc007xqj.2">
    <molecule id="Q9D9R9-2"/>
    <property type="organism name" value="mouse"/>
</dbReference>
<dbReference type="AGR" id="MGI:2685766"/>
<dbReference type="CTD" id="121006"/>
<dbReference type="MGI" id="MGI:2685766">
    <property type="gene designation" value="Fam186a"/>
</dbReference>
<dbReference type="VEuPathDB" id="HostDB:ENSMUSG00000045350"/>
<dbReference type="eggNOG" id="ENOG502S707">
    <property type="taxonomic scope" value="Eukaryota"/>
</dbReference>
<dbReference type="GeneTree" id="ENSGT00940000163376"/>
<dbReference type="HOGENOM" id="CLU_2020593_0_0_1"/>
<dbReference type="InParanoid" id="Q9D9R9"/>
<dbReference type="OrthoDB" id="9942939at2759"/>
<dbReference type="BioGRID-ORCS" id="72277">
    <property type="hits" value="3 hits in 39 CRISPR screens"/>
</dbReference>
<dbReference type="ChiTaRS" id="Fam186a">
    <property type="organism name" value="mouse"/>
</dbReference>
<dbReference type="PRO" id="PR:Q9D9R9"/>
<dbReference type="Proteomes" id="UP000000589">
    <property type="component" value="Chromosome 15"/>
</dbReference>
<dbReference type="RNAct" id="Q9D9R9">
    <property type="molecule type" value="protein"/>
</dbReference>
<dbReference type="Bgee" id="ENSMUSG00000045350">
    <property type="expression patterns" value="Expressed in spermatid and 10 other cell types or tissues"/>
</dbReference>
<dbReference type="ExpressionAtlas" id="Q9D9R9">
    <property type="expression patterns" value="baseline and differential"/>
</dbReference>
<dbReference type="InterPro" id="IPR049146">
    <property type="entry name" value="FAM186A_B_C"/>
</dbReference>
<dbReference type="InterPro" id="IPR049144">
    <property type="entry name" value="FAM186A_B_N"/>
</dbReference>
<dbReference type="InterPro" id="IPR049147">
    <property type="entry name" value="FAM186A_PQQAQ"/>
</dbReference>
<dbReference type="PANTHER" id="PTHR33590">
    <property type="entry name" value="GLUTENIN, HIGH MOLECULAR WEIGHT SUBUNIT PW212-RELATED PROTEIN"/>
    <property type="match status" value="1"/>
</dbReference>
<dbReference type="PANTHER" id="PTHR33590:SF2">
    <property type="entry name" value="PROTEIN FAM186A"/>
    <property type="match status" value="1"/>
</dbReference>
<dbReference type="Pfam" id="PF20865">
    <property type="entry name" value="FAM186A-B_C"/>
    <property type="match status" value="1"/>
</dbReference>
<dbReference type="Pfam" id="PF20870">
    <property type="entry name" value="FAM186A-B_N"/>
    <property type="match status" value="1"/>
</dbReference>
<dbReference type="Pfam" id="PF20869">
    <property type="entry name" value="FAM186A_PQQAQ"/>
    <property type="match status" value="18"/>
</dbReference>
<comment type="alternative products">
    <event type="alternative splicing"/>
    <isoform>
        <id>Q9D9R9-1</id>
        <name>1</name>
        <sequence type="displayed"/>
    </isoform>
    <isoform>
        <id>Q9D9R9-2</id>
        <name>2</name>
        <sequence type="described" ref="VSP_036417"/>
    </isoform>
</comment>
<comment type="similarity">
    <text evidence="3">Belongs to the FAM186 family.</text>
</comment>
<proteinExistence type="evidence at transcript level"/>
<protein>
    <recommendedName>
        <fullName>Protein FAM186A</fullName>
    </recommendedName>
</protein>
<feature type="chain" id="PRO_0000332202" description="Protein FAM186A">
    <location>
        <begin position="1"/>
        <end position="1790"/>
    </location>
</feature>
<feature type="splice variant" id="VSP_036417" description="In isoform 2." evidence="1 2">
    <location>
        <begin position="1"/>
        <end position="1686"/>
    </location>
</feature>
<organism>
    <name type="scientific">Mus musculus</name>
    <name type="common">Mouse</name>
    <dbReference type="NCBI Taxonomy" id="10090"/>
    <lineage>
        <taxon>Eukaryota</taxon>
        <taxon>Metazoa</taxon>
        <taxon>Chordata</taxon>
        <taxon>Craniata</taxon>
        <taxon>Vertebrata</taxon>
        <taxon>Euteleostomi</taxon>
        <taxon>Mammalia</taxon>
        <taxon>Eutheria</taxon>
        <taxon>Euarchontoglires</taxon>
        <taxon>Glires</taxon>
        <taxon>Rodentia</taxon>
        <taxon>Myomorpha</taxon>
        <taxon>Muroidea</taxon>
        <taxon>Muridae</taxon>
        <taxon>Murinae</taxon>
        <taxon>Mus</taxon>
        <taxon>Mus</taxon>
    </lineage>
</organism>
<evidence type="ECO:0000303" key="1">
    <source>
    </source>
</evidence>
<evidence type="ECO:0000303" key="2">
    <source>
    </source>
</evidence>
<evidence type="ECO:0000305" key="3"/>
<keyword id="KW-0025">Alternative splicing</keyword>
<keyword id="KW-1185">Reference proteome</keyword>
<accession>Q9D9R9</accession>
<sequence>MPVKRQSKVYYESDSDDDDDEFKELATLRKPISNRDNPLSLQFEIPASVQSVIHKIEESHIFRAKEEVIWRLTEIMSNVELIMTRYNIDSMSPGRKGSSSESQKKKRKAFLEKIATVMTNVDLRERTLSKILSWLEEWNLILSEVSAINMDDYYHWTVKMELIPDTLKRISKNVDSLIQMALLLVEEKKRAKKRILARGTLWKAWKDRAIKRPATAQALRLDQMIFDQIGLNAKVSEIQGMLQELIGTAMFSKLENTAIKYMSTTVINLSKALNTVSDELKLARALGVTLTPEQYKEDRISLTPLQAQVLGITLNLQQAKALGITLTPEQVKAQRVNLIPQQYQVHGTTLTTQQAEAQRTNLTPEQAKALGLPLIPPKPITFTREQTQALGITPTHQPITLTSEQVQALGITPTHQPITLTPEQAQALALILTTEQVKTQRINLSPDQTQALGITPTPQPITFTPEQTQALGITPTPQLITLTPEQAKALANTLTAEQVSLSPQQAEALGITPTPQPTTLTPEQAQALGITPTPQPITLTPEQVQALGITPNRESITLSPEQAQALGITPTPQPTTLTPEQTQALGITPTPQPITLTPEQAQALGITPTPQPITLTPEQTQALGITPTPQPITLTPEQAQALGITPTPQPITLTPEQTQALGITPTPQPITLTPEQAQALGITPTPQPITLTPEQAQALGITPTPQPITLTPEQAQALGITPTPQPITLTPEQTQALGITPTPQPITLTPEQAQALGITPTPQPITLTPEQVQALGITPTPQPITLTPEQAQALGITPTPQPITLTPEQAQALGITPTPQPITLTPEQTQALGITPTPQPITLTPEQAQALGITPTPQPITLTPELVQALGITPTPQPITLTPEQAQALGITPTPQPTTLSPEQAQALGITPTPQPITLTPEQAQALGITPTPQPTTLSPEQAQALGISLIPKQQEISLSPEQAQALGLTLTPQQAQVQKIYLTPQQAQALGITVSPEQAKAKGISLTPEEAHSLGIILTVEQAKAKRINLTPQQAQDLGLTLTPEQAQDLGISLIPKQEISFSPLQAQAMGLTLTPQQAQVQKIYLTPQQAQALGITVSPEQAKGISLTPEEAHSLGIILTVEQAKAQRINLTPQQAQDLGLTLTPEQAQDLGISLIPKQQEISFSPLQAQAMGLTLTPQQAQVQKIYLTPQQAQALGITVSPEQAKGISLTPEEAHSLGIILTVEQAKAQRINLTPQQAQDLGITLTPEQAQDLGISLIPKQQEISFSPLQAQAMGLTLTPQQAQVQKIYLTPQQAQALGITVSPEQAKGISLTPEEAHSLGIALTVEQAKAQRINLTPQQAQDLGLTLTPEQAQDLGIASTLKQAEAVGIIPTPTPEPYQERRLSLTSEQVQALRTSFPTKETLSLGIYLTPKQAQYLGITLTASQAKVMKICLTPEQAQALGITVTPKQAKARRTSLTPEQAQALGVILTPEQAQAHRITVTPEQAQALGIALTPEQAHALGIALTPEQAQAQDKPWTPTPVSSTREAKMIVSPTDQHPEDGYVVDVEAQRKNLVTLNQAAQTSALPAQYLTIAKNLIIELLHIDTVRLGYLSRKYVAYRLIQLARNHLTKRVKTIQNTGKGYEVQSLYTMLDRIDQYQKKVMHSWTDKQKQLEQRRKQCLRSMTQFFSQLERGYKLSLSQPMPSIPSFKKIPGFTKLQRPVLELLIDDSKRSDLFKTLGQASVEAVWNADLSTSSYPIIEKAPMSALWAQLGGYPDIPKLLQLDIQSTFRKSLASIRSQSKKIRK</sequence>